<name>PURA_ASPNC</name>
<protein>
    <recommendedName>
        <fullName evidence="2">Adenylosuccinate synthetase</fullName>
        <shortName evidence="2">AMPSase</shortName>
        <shortName evidence="2">AdSS</shortName>
        <ecNumber evidence="2">6.3.4.4</ecNumber>
    </recommendedName>
    <alternativeName>
        <fullName evidence="2">IMP--aspartate ligase</fullName>
    </alternativeName>
</protein>
<gene>
    <name type="ORF">An01g13920</name>
</gene>
<dbReference type="EC" id="6.3.4.4" evidence="2"/>
<dbReference type="EMBL" id="AM269991">
    <property type="protein sequence ID" value="CAK37396.1"/>
    <property type="molecule type" value="Genomic_DNA"/>
</dbReference>
<dbReference type="RefSeq" id="XP_001389791.1">
    <property type="nucleotide sequence ID" value="XM_001389754.2"/>
</dbReference>
<dbReference type="SMR" id="A2QB52"/>
<dbReference type="EnsemblFungi" id="CAK37396">
    <property type="protein sequence ID" value="CAK37396"/>
    <property type="gene ID" value="An01g13920"/>
</dbReference>
<dbReference type="GeneID" id="4977251"/>
<dbReference type="KEGG" id="ang:An01g13920"/>
<dbReference type="VEuPathDB" id="FungiDB:An01g13920"/>
<dbReference type="HOGENOM" id="CLU_029848_3_2_1"/>
<dbReference type="UniPathway" id="UPA00075">
    <property type="reaction ID" value="UER00335"/>
</dbReference>
<dbReference type="Proteomes" id="UP000006706">
    <property type="component" value="Chromosome 2R"/>
</dbReference>
<dbReference type="GO" id="GO:0005737">
    <property type="term" value="C:cytoplasm"/>
    <property type="evidence" value="ECO:0007669"/>
    <property type="project" value="UniProtKB-SubCell"/>
</dbReference>
<dbReference type="GO" id="GO:0004019">
    <property type="term" value="F:adenylosuccinate synthase activity"/>
    <property type="evidence" value="ECO:0007669"/>
    <property type="project" value="UniProtKB-UniRule"/>
</dbReference>
<dbReference type="GO" id="GO:0016208">
    <property type="term" value="F:AMP binding"/>
    <property type="evidence" value="ECO:0007669"/>
    <property type="project" value="EnsemblFungi"/>
</dbReference>
<dbReference type="GO" id="GO:0019002">
    <property type="term" value="F:GMP binding"/>
    <property type="evidence" value="ECO:0007669"/>
    <property type="project" value="EnsemblFungi"/>
</dbReference>
<dbReference type="GO" id="GO:0005525">
    <property type="term" value="F:GTP binding"/>
    <property type="evidence" value="ECO:0007669"/>
    <property type="project" value="UniProtKB-UniRule"/>
</dbReference>
<dbReference type="GO" id="GO:0000287">
    <property type="term" value="F:magnesium ion binding"/>
    <property type="evidence" value="ECO:0007669"/>
    <property type="project" value="UniProtKB-UniRule"/>
</dbReference>
<dbReference type="GO" id="GO:0044208">
    <property type="term" value="P:'de novo' AMP biosynthetic process"/>
    <property type="evidence" value="ECO:0007669"/>
    <property type="project" value="UniProtKB-UniRule"/>
</dbReference>
<dbReference type="GO" id="GO:0071276">
    <property type="term" value="P:cellular response to cadmium ion"/>
    <property type="evidence" value="ECO:0007669"/>
    <property type="project" value="EnsemblFungi"/>
</dbReference>
<dbReference type="GO" id="GO:0046040">
    <property type="term" value="P:IMP metabolic process"/>
    <property type="evidence" value="ECO:0007669"/>
    <property type="project" value="TreeGrafter"/>
</dbReference>
<dbReference type="CDD" id="cd03108">
    <property type="entry name" value="AdSS"/>
    <property type="match status" value="1"/>
</dbReference>
<dbReference type="FunFam" id="1.10.300.10:FF:000001">
    <property type="entry name" value="Adenylosuccinate synthetase"/>
    <property type="match status" value="1"/>
</dbReference>
<dbReference type="FunFam" id="3.90.170.10:FF:000001">
    <property type="entry name" value="Adenylosuccinate synthetase"/>
    <property type="match status" value="1"/>
</dbReference>
<dbReference type="Gene3D" id="3.40.440.10">
    <property type="entry name" value="Adenylosuccinate Synthetase, subunit A, domain 1"/>
    <property type="match status" value="1"/>
</dbReference>
<dbReference type="Gene3D" id="1.10.300.10">
    <property type="entry name" value="Adenylosuccinate Synthetase, subunit A, domain 2"/>
    <property type="match status" value="1"/>
</dbReference>
<dbReference type="Gene3D" id="3.90.170.10">
    <property type="entry name" value="Adenylosuccinate Synthetase, subunit A, domain 3"/>
    <property type="match status" value="1"/>
</dbReference>
<dbReference type="HAMAP" id="MF_00011">
    <property type="entry name" value="Adenylosucc_synth"/>
    <property type="match status" value="1"/>
</dbReference>
<dbReference type="InterPro" id="IPR018220">
    <property type="entry name" value="Adenylosuccin_syn_GTP-bd"/>
</dbReference>
<dbReference type="InterPro" id="IPR033128">
    <property type="entry name" value="Adenylosuccin_syn_Lys_AS"/>
</dbReference>
<dbReference type="InterPro" id="IPR042109">
    <property type="entry name" value="Adenylosuccinate_synth_dom1"/>
</dbReference>
<dbReference type="InterPro" id="IPR042110">
    <property type="entry name" value="Adenylosuccinate_synth_dom2"/>
</dbReference>
<dbReference type="InterPro" id="IPR042111">
    <property type="entry name" value="Adenylosuccinate_synth_dom3"/>
</dbReference>
<dbReference type="InterPro" id="IPR001114">
    <property type="entry name" value="Adenylosuccinate_synthetase"/>
</dbReference>
<dbReference type="InterPro" id="IPR027417">
    <property type="entry name" value="P-loop_NTPase"/>
</dbReference>
<dbReference type="NCBIfam" id="NF002223">
    <property type="entry name" value="PRK01117.1"/>
    <property type="match status" value="1"/>
</dbReference>
<dbReference type="NCBIfam" id="TIGR00184">
    <property type="entry name" value="purA"/>
    <property type="match status" value="1"/>
</dbReference>
<dbReference type="PANTHER" id="PTHR11846">
    <property type="entry name" value="ADENYLOSUCCINATE SYNTHETASE"/>
    <property type="match status" value="1"/>
</dbReference>
<dbReference type="PANTHER" id="PTHR11846:SF0">
    <property type="entry name" value="ADENYLOSUCCINATE SYNTHETASE"/>
    <property type="match status" value="1"/>
</dbReference>
<dbReference type="Pfam" id="PF00709">
    <property type="entry name" value="Adenylsucc_synt"/>
    <property type="match status" value="1"/>
</dbReference>
<dbReference type="SMART" id="SM00788">
    <property type="entry name" value="Adenylsucc_synt"/>
    <property type="match status" value="1"/>
</dbReference>
<dbReference type="SUPFAM" id="SSF52540">
    <property type="entry name" value="P-loop containing nucleoside triphosphate hydrolases"/>
    <property type="match status" value="1"/>
</dbReference>
<dbReference type="PROSITE" id="PS01266">
    <property type="entry name" value="ADENYLOSUCCIN_SYN_1"/>
    <property type="match status" value="1"/>
</dbReference>
<dbReference type="PROSITE" id="PS00513">
    <property type="entry name" value="ADENYLOSUCCIN_SYN_2"/>
    <property type="match status" value="1"/>
</dbReference>
<sequence>MGVTIVLGSQWGDEGKGKITDMLAQQATLCCRAAGGHNAGHTIVHGDKTYDFHILPSGLVSPSCVNLIGAGTVVHVPSFFKELASLEDKGLEGAGKRIFISDRAHVCFDLHSVVDGLEEAKLGGRKVGTTGKGIGPCYSDKAARRGVRVGEILDEALFERKLRSLDAGYRARFGELEYNVEEELARFKEYRKRLGPYIVDQLAFLQKYKDAPNTLVEGANALMLDLDHGTYPFVTSSSTGLGGAVQALSLNPTSISSIIGVVKAYTTRVGSGPFPSEQLNDAGDKLQGVGKEFGVTTGRRRRCGWFDMVLCRYSQAINHYTALNLTKLDVLDDFDEIKVGVAYILPDGTRTENTMPADPEVLEKVQVEYVTLPGWKSNTMGVKKYEDLPANARAYIEYIERGLGGVPVKWIGTGPARDHMICRE</sequence>
<reference key="1">
    <citation type="journal article" date="2007" name="Nat. Biotechnol.">
        <title>Genome sequencing and analysis of the versatile cell factory Aspergillus niger CBS 513.88.</title>
        <authorList>
            <person name="Pel H.J."/>
            <person name="de Winde J.H."/>
            <person name="Archer D.B."/>
            <person name="Dyer P.S."/>
            <person name="Hofmann G."/>
            <person name="Schaap P.J."/>
            <person name="Turner G."/>
            <person name="de Vries R.P."/>
            <person name="Albang R."/>
            <person name="Albermann K."/>
            <person name="Andersen M.R."/>
            <person name="Bendtsen J.D."/>
            <person name="Benen J.A.E."/>
            <person name="van den Berg M."/>
            <person name="Breestraat S."/>
            <person name="Caddick M.X."/>
            <person name="Contreras R."/>
            <person name="Cornell M."/>
            <person name="Coutinho P.M."/>
            <person name="Danchin E.G.J."/>
            <person name="Debets A.J.M."/>
            <person name="Dekker P."/>
            <person name="van Dijck P.W.M."/>
            <person name="van Dijk A."/>
            <person name="Dijkhuizen L."/>
            <person name="Driessen A.J.M."/>
            <person name="d'Enfert C."/>
            <person name="Geysens S."/>
            <person name="Goosen C."/>
            <person name="Groot G.S.P."/>
            <person name="de Groot P.W.J."/>
            <person name="Guillemette T."/>
            <person name="Henrissat B."/>
            <person name="Herweijer M."/>
            <person name="van den Hombergh J.P.T.W."/>
            <person name="van den Hondel C.A.M.J.J."/>
            <person name="van der Heijden R.T.J.M."/>
            <person name="van der Kaaij R.M."/>
            <person name="Klis F.M."/>
            <person name="Kools H.J."/>
            <person name="Kubicek C.P."/>
            <person name="van Kuyk P.A."/>
            <person name="Lauber J."/>
            <person name="Lu X."/>
            <person name="van der Maarel M.J.E.C."/>
            <person name="Meulenberg R."/>
            <person name="Menke H."/>
            <person name="Mortimer M.A."/>
            <person name="Nielsen J."/>
            <person name="Oliver S.G."/>
            <person name="Olsthoorn M."/>
            <person name="Pal K."/>
            <person name="van Peij N.N.M.E."/>
            <person name="Ram A.F.J."/>
            <person name="Rinas U."/>
            <person name="Roubos J.A."/>
            <person name="Sagt C.M.J."/>
            <person name="Schmoll M."/>
            <person name="Sun J."/>
            <person name="Ussery D."/>
            <person name="Varga J."/>
            <person name="Vervecken W."/>
            <person name="van de Vondervoort P.J.J."/>
            <person name="Wedler H."/>
            <person name="Woesten H.A.B."/>
            <person name="Zeng A.-P."/>
            <person name="van Ooyen A.J.J."/>
            <person name="Visser J."/>
            <person name="Stam H."/>
        </authorList>
    </citation>
    <scope>NUCLEOTIDE SEQUENCE [LARGE SCALE GENOMIC DNA]</scope>
    <source>
        <strain>ATCC MYA-4892 / CBS 513.88 / FGSC A1513</strain>
    </source>
</reference>
<feature type="chain" id="PRO_0000399323" description="Adenylosuccinate synthetase">
    <location>
        <begin position="1"/>
        <end position="424"/>
    </location>
</feature>
<feature type="active site" description="Proton acceptor" evidence="2">
    <location>
        <position position="13"/>
    </location>
</feature>
<feature type="active site" description="Proton donor" evidence="2">
    <location>
        <position position="41"/>
    </location>
</feature>
<feature type="binding site" evidence="2">
    <location>
        <begin position="12"/>
        <end position="18"/>
    </location>
    <ligand>
        <name>GTP</name>
        <dbReference type="ChEBI" id="CHEBI:37565"/>
    </ligand>
</feature>
<feature type="binding site" description="in other chain" evidence="2">
    <location>
        <begin position="13"/>
        <end position="16"/>
    </location>
    <ligand>
        <name>IMP</name>
        <dbReference type="ChEBI" id="CHEBI:58053"/>
        <note>ligand shared between dimeric partners</note>
    </ligand>
</feature>
<feature type="binding site" evidence="2">
    <location>
        <position position="13"/>
    </location>
    <ligand>
        <name>Mg(2+)</name>
        <dbReference type="ChEBI" id="CHEBI:18420"/>
    </ligand>
</feature>
<feature type="binding site" description="in other chain" evidence="2">
    <location>
        <begin position="38"/>
        <end position="41"/>
    </location>
    <ligand>
        <name>IMP</name>
        <dbReference type="ChEBI" id="CHEBI:58053"/>
        <note>ligand shared between dimeric partners</note>
    </ligand>
</feature>
<feature type="binding site" evidence="2">
    <location>
        <begin position="40"/>
        <end position="42"/>
    </location>
    <ligand>
        <name>GTP</name>
        <dbReference type="ChEBI" id="CHEBI:37565"/>
    </ligand>
</feature>
<feature type="binding site" evidence="2">
    <location>
        <position position="40"/>
    </location>
    <ligand>
        <name>Mg(2+)</name>
        <dbReference type="ChEBI" id="CHEBI:18420"/>
    </ligand>
</feature>
<feature type="binding site" description="in other chain" evidence="2">
    <location>
        <position position="130"/>
    </location>
    <ligand>
        <name>IMP</name>
        <dbReference type="ChEBI" id="CHEBI:58053"/>
        <note>ligand shared between dimeric partners</note>
    </ligand>
</feature>
<feature type="binding site" evidence="2">
    <location>
        <position position="144"/>
    </location>
    <ligand>
        <name>IMP</name>
        <dbReference type="ChEBI" id="CHEBI:58053"/>
        <note>ligand shared between dimeric partners</note>
    </ligand>
</feature>
<feature type="binding site" description="in other chain" evidence="2">
    <location>
        <position position="220"/>
    </location>
    <ligand>
        <name>IMP</name>
        <dbReference type="ChEBI" id="CHEBI:58053"/>
        <note>ligand shared between dimeric partners</note>
    </ligand>
</feature>
<feature type="binding site" description="in other chain" evidence="2">
    <location>
        <position position="235"/>
    </location>
    <ligand>
        <name>IMP</name>
        <dbReference type="ChEBI" id="CHEBI:58053"/>
        <note>ligand shared between dimeric partners</note>
    </ligand>
</feature>
<feature type="binding site" evidence="2">
    <location>
        <begin position="295"/>
        <end position="301"/>
    </location>
    <ligand>
        <name>substrate</name>
    </ligand>
</feature>
<feature type="binding site" description="in other chain" evidence="2">
    <location>
        <position position="299"/>
    </location>
    <ligand>
        <name>IMP</name>
        <dbReference type="ChEBI" id="CHEBI:58053"/>
        <note>ligand shared between dimeric partners</note>
    </ligand>
</feature>
<feature type="binding site" evidence="2">
    <location>
        <position position="301"/>
    </location>
    <ligand>
        <name>GTP</name>
        <dbReference type="ChEBI" id="CHEBI:37565"/>
    </ligand>
</feature>
<feature type="binding site" evidence="2">
    <location>
        <begin position="327"/>
        <end position="329"/>
    </location>
    <ligand>
        <name>GTP</name>
        <dbReference type="ChEBI" id="CHEBI:37565"/>
    </ligand>
</feature>
<feature type="binding site" evidence="2">
    <location>
        <begin position="412"/>
        <end position="414"/>
    </location>
    <ligand>
        <name>GTP</name>
        <dbReference type="ChEBI" id="CHEBI:37565"/>
    </ligand>
</feature>
<proteinExistence type="inferred from homology"/>
<organism>
    <name type="scientific">Aspergillus niger (strain ATCC MYA-4892 / CBS 513.88 / FGSC A1513)</name>
    <dbReference type="NCBI Taxonomy" id="425011"/>
    <lineage>
        <taxon>Eukaryota</taxon>
        <taxon>Fungi</taxon>
        <taxon>Dikarya</taxon>
        <taxon>Ascomycota</taxon>
        <taxon>Pezizomycotina</taxon>
        <taxon>Eurotiomycetes</taxon>
        <taxon>Eurotiomycetidae</taxon>
        <taxon>Eurotiales</taxon>
        <taxon>Aspergillaceae</taxon>
        <taxon>Aspergillus</taxon>
        <taxon>Aspergillus subgen. Circumdati</taxon>
    </lineage>
</organism>
<evidence type="ECO:0000250" key="1"/>
<evidence type="ECO:0000255" key="2">
    <source>
        <dbReference type="HAMAP-Rule" id="MF_03125"/>
    </source>
</evidence>
<accession>A2QB52</accession>
<comment type="function">
    <text evidence="1">Plays an important role in the de novo pathway and in the salvage pathway of purine nucleotide biosynthesis. Catalyzes the first committed step in the biosynthesis of AMP from IMP (By similarity).</text>
</comment>
<comment type="catalytic activity">
    <reaction evidence="2">
        <text>IMP + L-aspartate + GTP = N(6)-(1,2-dicarboxyethyl)-AMP + GDP + phosphate + 2 H(+)</text>
        <dbReference type="Rhea" id="RHEA:15753"/>
        <dbReference type="ChEBI" id="CHEBI:15378"/>
        <dbReference type="ChEBI" id="CHEBI:29991"/>
        <dbReference type="ChEBI" id="CHEBI:37565"/>
        <dbReference type="ChEBI" id="CHEBI:43474"/>
        <dbReference type="ChEBI" id="CHEBI:57567"/>
        <dbReference type="ChEBI" id="CHEBI:58053"/>
        <dbReference type="ChEBI" id="CHEBI:58189"/>
        <dbReference type="EC" id="6.3.4.4"/>
    </reaction>
</comment>
<comment type="cofactor">
    <cofactor evidence="2">
        <name>Mg(2+)</name>
        <dbReference type="ChEBI" id="CHEBI:18420"/>
    </cofactor>
    <text evidence="2">Binds 1 Mg(2+) ion per subunit.</text>
</comment>
<comment type="pathway">
    <text evidence="2">Purine metabolism; AMP biosynthesis via de novo pathway; AMP from IMP: step 1/2.</text>
</comment>
<comment type="subunit">
    <text evidence="2">Homodimer.</text>
</comment>
<comment type="subcellular location">
    <subcellularLocation>
        <location evidence="2">Cytoplasm</location>
    </subcellularLocation>
</comment>
<comment type="similarity">
    <text evidence="2">Belongs to the adenylosuccinate synthetase family.</text>
</comment>
<keyword id="KW-0963">Cytoplasm</keyword>
<keyword id="KW-0342">GTP-binding</keyword>
<keyword id="KW-0436">Ligase</keyword>
<keyword id="KW-0460">Magnesium</keyword>
<keyword id="KW-0479">Metal-binding</keyword>
<keyword id="KW-0547">Nucleotide-binding</keyword>
<keyword id="KW-0658">Purine biosynthesis</keyword>
<keyword id="KW-1185">Reference proteome</keyword>